<reference key="1">
    <citation type="journal article" date="2008" name="J. Bacteriol.">
        <title>Complete genome sequence of Neisseria gonorrhoeae NCCP11945.</title>
        <authorList>
            <person name="Chung G.T."/>
            <person name="Yoo J.S."/>
            <person name="Oh H.B."/>
            <person name="Lee Y.S."/>
            <person name="Cha S.H."/>
            <person name="Kim S.J."/>
            <person name="Yoo C.K."/>
        </authorList>
    </citation>
    <scope>NUCLEOTIDE SEQUENCE [LARGE SCALE GENOMIC DNA]</scope>
    <source>
        <strain>NCCP11945</strain>
    </source>
</reference>
<dbReference type="EC" id="2.1.2.9" evidence="1"/>
<dbReference type="EMBL" id="CP001050">
    <property type="protein sequence ID" value="ACF31000.1"/>
    <property type="molecule type" value="Genomic_DNA"/>
</dbReference>
<dbReference type="RefSeq" id="WP_003690130.1">
    <property type="nucleotide sequence ID" value="NC_011035.1"/>
</dbReference>
<dbReference type="SMR" id="B4RPX5"/>
<dbReference type="GeneID" id="66754256"/>
<dbReference type="KEGG" id="ngk:NGK_2398"/>
<dbReference type="HOGENOM" id="CLU_033347_1_2_4"/>
<dbReference type="Proteomes" id="UP000002564">
    <property type="component" value="Chromosome"/>
</dbReference>
<dbReference type="GO" id="GO:0005829">
    <property type="term" value="C:cytosol"/>
    <property type="evidence" value="ECO:0007669"/>
    <property type="project" value="TreeGrafter"/>
</dbReference>
<dbReference type="GO" id="GO:0004479">
    <property type="term" value="F:methionyl-tRNA formyltransferase activity"/>
    <property type="evidence" value="ECO:0007669"/>
    <property type="project" value="UniProtKB-UniRule"/>
</dbReference>
<dbReference type="CDD" id="cd08646">
    <property type="entry name" value="FMT_core_Met-tRNA-FMT_N"/>
    <property type="match status" value="1"/>
</dbReference>
<dbReference type="CDD" id="cd08704">
    <property type="entry name" value="Met_tRNA_FMT_C"/>
    <property type="match status" value="1"/>
</dbReference>
<dbReference type="FunFam" id="3.40.50.12230:FF:000001">
    <property type="entry name" value="Methionyl-tRNA formyltransferase"/>
    <property type="match status" value="1"/>
</dbReference>
<dbReference type="Gene3D" id="3.40.50.12230">
    <property type="match status" value="1"/>
</dbReference>
<dbReference type="HAMAP" id="MF_00182">
    <property type="entry name" value="Formyl_trans"/>
    <property type="match status" value="1"/>
</dbReference>
<dbReference type="InterPro" id="IPR005794">
    <property type="entry name" value="Fmt"/>
</dbReference>
<dbReference type="InterPro" id="IPR005793">
    <property type="entry name" value="Formyl_trans_C"/>
</dbReference>
<dbReference type="InterPro" id="IPR002376">
    <property type="entry name" value="Formyl_transf_N"/>
</dbReference>
<dbReference type="InterPro" id="IPR036477">
    <property type="entry name" value="Formyl_transf_N_sf"/>
</dbReference>
<dbReference type="InterPro" id="IPR011034">
    <property type="entry name" value="Formyl_transferase-like_C_sf"/>
</dbReference>
<dbReference type="InterPro" id="IPR001555">
    <property type="entry name" value="GART_AS"/>
</dbReference>
<dbReference type="InterPro" id="IPR044135">
    <property type="entry name" value="Met-tRNA-FMT_C"/>
</dbReference>
<dbReference type="InterPro" id="IPR041711">
    <property type="entry name" value="Met-tRNA-FMT_N"/>
</dbReference>
<dbReference type="NCBIfam" id="TIGR00460">
    <property type="entry name" value="fmt"/>
    <property type="match status" value="1"/>
</dbReference>
<dbReference type="PANTHER" id="PTHR11138">
    <property type="entry name" value="METHIONYL-TRNA FORMYLTRANSFERASE"/>
    <property type="match status" value="1"/>
</dbReference>
<dbReference type="PANTHER" id="PTHR11138:SF5">
    <property type="entry name" value="METHIONYL-TRNA FORMYLTRANSFERASE, MITOCHONDRIAL"/>
    <property type="match status" value="1"/>
</dbReference>
<dbReference type="Pfam" id="PF02911">
    <property type="entry name" value="Formyl_trans_C"/>
    <property type="match status" value="1"/>
</dbReference>
<dbReference type="Pfam" id="PF00551">
    <property type="entry name" value="Formyl_trans_N"/>
    <property type="match status" value="1"/>
</dbReference>
<dbReference type="SUPFAM" id="SSF50486">
    <property type="entry name" value="FMT C-terminal domain-like"/>
    <property type="match status" value="1"/>
</dbReference>
<dbReference type="SUPFAM" id="SSF53328">
    <property type="entry name" value="Formyltransferase"/>
    <property type="match status" value="1"/>
</dbReference>
<dbReference type="PROSITE" id="PS00373">
    <property type="entry name" value="GART"/>
    <property type="match status" value="1"/>
</dbReference>
<organism>
    <name type="scientific">Neisseria gonorrhoeae (strain NCCP11945)</name>
    <dbReference type="NCBI Taxonomy" id="521006"/>
    <lineage>
        <taxon>Bacteria</taxon>
        <taxon>Pseudomonadati</taxon>
        <taxon>Pseudomonadota</taxon>
        <taxon>Betaproteobacteria</taxon>
        <taxon>Neisseriales</taxon>
        <taxon>Neisseriaceae</taxon>
        <taxon>Neisseria</taxon>
    </lineage>
</organism>
<gene>
    <name evidence="1" type="primary">fmt</name>
    <name type="ordered locus">NGK_2398</name>
</gene>
<keyword id="KW-0648">Protein biosynthesis</keyword>
<keyword id="KW-0808">Transferase</keyword>
<proteinExistence type="inferred from homology"/>
<name>FMT_NEIG2</name>
<evidence type="ECO:0000255" key="1">
    <source>
        <dbReference type="HAMAP-Rule" id="MF_00182"/>
    </source>
</evidence>
<accession>B4RPX5</accession>
<feature type="chain" id="PRO_1000098422" description="Methionyl-tRNA formyltransferase">
    <location>
        <begin position="1"/>
        <end position="308"/>
    </location>
</feature>
<feature type="binding site" evidence="1">
    <location>
        <begin position="110"/>
        <end position="113"/>
    </location>
    <ligand>
        <name>(6S)-5,6,7,8-tetrahydrofolate</name>
        <dbReference type="ChEBI" id="CHEBI:57453"/>
    </ligand>
</feature>
<comment type="function">
    <text evidence="1">Attaches a formyl group to the free amino group of methionyl-tRNA(fMet). The formyl group appears to play a dual role in the initiator identity of N-formylmethionyl-tRNA by promoting its recognition by IF2 and preventing the misappropriation of this tRNA by the elongation apparatus.</text>
</comment>
<comment type="catalytic activity">
    <reaction evidence="1">
        <text>L-methionyl-tRNA(fMet) + (6R)-10-formyltetrahydrofolate = N-formyl-L-methionyl-tRNA(fMet) + (6S)-5,6,7,8-tetrahydrofolate + H(+)</text>
        <dbReference type="Rhea" id="RHEA:24380"/>
        <dbReference type="Rhea" id="RHEA-COMP:9952"/>
        <dbReference type="Rhea" id="RHEA-COMP:9953"/>
        <dbReference type="ChEBI" id="CHEBI:15378"/>
        <dbReference type="ChEBI" id="CHEBI:57453"/>
        <dbReference type="ChEBI" id="CHEBI:78530"/>
        <dbReference type="ChEBI" id="CHEBI:78844"/>
        <dbReference type="ChEBI" id="CHEBI:195366"/>
        <dbReference type="EC" id="2.1.2.9"/>
    </reaction>
</comment>
<comment type="similarity">
    <text evidence="1">Belongs to the Fmt family.</text>
</comment>
<protein>
    <recommendedName>
        <fullName evidence="1">Methionyl-tRNA formyltransferase</fullName>
        <ecNumber evidence="1">2.1.2.9</ecNumber>
    </recommendedName>
</protein>
<sequence length="308" mass="32813">MKVIFAGTPDFAAAALKAVAAAGFEIPLVLTQPDRPKGRGMQLTAPPVKQAALELGLRVAQPEKLRNNAEALQMLKEVEADVMVVAAYGLILPQDVLDTPKHGCLNIHASLLPRWRGAAPIQRAIEAGDAETGVCIMQMDIGLDTGDVVSEHRYAIQPTDTANEVHDALMEIGAAAVVADLQQLQSKGRLNAVKQPEEGVTYAQKLSKEEARIDWSESADIIERKIRAFNPVPAAWVEYQGKPMKIRRAEVVAQQGTAGEVLSCSADGLVVACGESALKITELQPAGGRRMNIAAFAAGRSIEAGAKL</sequence>